<gene>
    <name evidence="1" type="primary">recA</name>
    <name type="ordered locus">ZMO1166</name>
</gene>
<sequence>MAPQNKVTTSGKDNNMDKQKALEAALAQIDRAFGKGSVMRLGSREKIEIDTISSGSLGLDIALGIGGLPRGRIVEIYGPESSGKTTLALHAIAEAQKAGGTAAFVDAEHALDPVYAKKLGVNTDDLIVSQPDTGEQALEITDTLIRSNAVDILVVDSVAALTPRAEIEGEMGDSHVGLQARLMSQALRKITGSINRSQTLVIFINQVRMKIGVMYGNPETTTGGNALKFYASVRLDIRRVGQIKDRDEIVGNATRVKVVKNKLAPPFKQVEFDIMYGEGVSKMGEILDLGVKAGIIDKSGSWFSHDSVRIGQGRENAKTFLREHPEMTEKIEKMIRHNTAEIADEMLDPSIPED</sequence>
<reference key="1">
    <citation type="submission" date="1999-01" db="EMBL/GenBank/DDBJ databases">
        <authorList>
            <person name="Lee H.J."/>
            <person name="Kang H.S."/>
        </authorList>
    </citation>
    <scope>NUCLEOTIDE SEQUENCE [GENOMIC DNA]</scope>
    <source>
        <strain>ATCC 31821 / ZM4 / CP4</strain>
    </source>
</reference>
<reference key="2">
    <citation type="journal article" date="2005" name="Nat. Biotechnol.">
        <title>The genome sequence of the ethanologenic bacterium Zymomonas mobilis ZM4.</title>
        <authorList>
            <person name="Seo J.-S."/>
            <person name="Chong H."/>
            <person name="Park H.S."/>
            <person name="Yoon K.-O."/>
            <person name="Jung C."/>
            <person name="Kim J.J."/>
            <person name="Hong J.H."/>
            <person name="Kim H."/>
            <person name="Kim J.-H."/>
            <person name="Kil J.-I."/>
            <person name="Park C.J."/>
            <person name="Oh H.-M."/>
            <person name="Lee J.-S."/>
            <person name="Jin S.-J."/>
            <person name="Um H.-W."/>
            <person name="Lee H.-J."/>
            <person name="Oh S.-J."/>
            <person name="Kim J.Y."/>
            <person name="Kang H.L."/>
            <person name="Lee S.Y."/>
            <person name="Lee K.J."/>
            <person name="Kang H.S."/>
        </authorList>
    </citation>
    <scope>NUCLEOTIDE SEQUENCE [LARGE SCALE GENOMIC DNA]</scope>
    <source>
        <strain>ATCC 31821 / ZM4 / CP4</strain>
    </source>
</reference>
<organism>
    <name type="scientific">Zymomonas mobilis subsp. mobilis (strain ATCC 31821 / ZM4 / CP4)</name>
    <dbReference type="NCBI Taxonomy" id="264203"/>
    <lineage>
        <taxon>Bacteria</taxon>
        <taxon>Pseudomonadati</taxon>
        <taxon>Pseudomonadota</taxon>
        <taxon>Alphaproteobacteria</taxon>
        <taxon>Sphingomonadales</taxon>
        <taxon>Zymomonadaceae</taxon>
        <taxon>Zymomonas</taxon>
    </lineage>
</organism>
<name>RECA_ZYMMO</name>
<protein>
    <recommendedName>
        <fullName evidence="1">Protein RecA</fullName>
    </recommendedName>
    <alternativeName>
        <fullName evidence="1">Recombinase A</fullName>
    </alternativeName>
</protein>
<proteinExistence type="inferred from homology"/>
<comment type="function">
    <text evidence="1">Can catalyze the hydrolysis of ATP in the presence of single-stranded DNA, the ATP-dependent uptake of single-stranded DNA by duplex DNA, and the ATP-dependent hybridization of homologous single-stranded DNAs. It interacts with LexA causing its activation and leading to its autocatalytic cleavage.</text>
</comment>
<comment type="subcellular location">
    <subcellularLocation>
        <location evidence="1">Cytoplasm</location>
    </subcellularLocation>
</comment>
<comment type="similarity">
    <text evidence="1">Belongs to the RecA family.</text>
</comment>
<comment type="sequence caution" evidence="2">
    <conflict type="erroneous initiation">
        <sequence resource="EMBL-CDS" id="AAD29645"/>
    </conflict>
</comment>
<dbReference type="EMBL" id="AF124757">
    <property type="protein sequence ID" value="AAD29645.1"/>
    <property type="status" value="ALT_INIT"/>
    <property type="molecule type" value="Genomic_DNA"/>
</dbReference>
<dbReference type="EMBL" id="AE008692">
    <property type="protein sequence ID" value="AAV89790.2"/>
    <property type="molecule type" value="Genomic_DNA"/>
</dbReference>
<dbReference type="RefSeq" id="WP_011240991.1">
    <property type="nucleotide sequence ID" value="NZ_CP035711.1"/>
</dbReference>
<dbReference type="SMR" id="Q9X5D8"/>
<dbReference type="STRING" id="264203.ZMO1166"/>
<dbReference type="GeneID" id="79903710"/>
<dbReference type="KEGG" id="zmo:ZMO1166"/>
<dbReference type="eggNOG" id="COG0468">
    <property type="taxonomic scope" value="Bacteria"/>
</dbReference>
<dbReference type="HOGENOM" id="CLU_040469_3_2_5"/>
<dbReference type="Proteomes" id="UP000001173">
    <property type="component" value="Chromosome"/>
</dbReference>
<dbReference type="GO" id="GO:0005829">
    <property type="term" value="C:cytosol"/>
    <property type="evidence" value="ECO:0007669"/>
    <property type="project" value="TreeGrafter"/>
</dbReference>
<dbReference type="GO" id="GO:0005524">
    <property type="term" value="F:ATP binding"/>
    <property type="evidence" value="ECO:0007669"/>
    <property type="project" value="UniProtKB-UniRule"/>
</dbReference>
<dbReference type="GO" id="GO:0016887">
    <property type="term" value="F:ATP hydrolysis activity"/>
    <property type="evidence" value="ECO:0007669"/>
    <property type="project" value="InterPro"/>
</dbReference>
<dbReference type="GO" id="GO:0140664">
    <property type="term" value="F:ATP-dependent DNA damage sensor activity"/>
    <property type="evidence" value="ECO:0007669"/>
    <property type="project" value="InterPro"/>
</dbReference>
<dbReference type="GO" id="GO:0003684">
    <property type="term" value="F:damaged DNA binding"/>
    <property type="evidence" value="ECO:0007669"/>
    <property type="project" value="UniProtKB-UniRule"/>
</dbReference>
<dbReference type="GO" id="GO:0003697">
    <property type="term" value="F:single-stranded DNA binding"/>
    <property type="evidence" value="ECO:0007669"/>
    <property type="project" value="UniProtKB-UniRule"/>
</dbReference>
<dbReference type="GO" id="GO:0006310">
    <property type="term" value="P:DNA recombination"/>
    <property type="evidence" value="ECO:0007669"/>
    <property type="project" value="UniProtKB-UniRule"/>
</dbReference>
<dbReference type="GO" id="GO:0006281">
    <property type="term" value="P:DNA repair"/>
    <property type="evidence" value="ECO:0007669"/>
    <property type="project" value="UniProtKB-UniRule"/>
</dbReference>
<dbReference type="GO" id="GO:0009432">
    <property type="term" value="P:SOS response"/>
    <property type="evidence" value="ECO:0007669"/>
    <property type="project" value="UniProtKB-UniRule"/>
</dbReference>
<dbReference type="CDD" id="cd00983">
    <property type="entry name" value="RecA"/>
    <property type="match status" value="1"/>
</dbReference>
<dbReference type="FunFam" id="3.40.50.300:FF:000087">
    <property type="entry name" value="Recombinase RecA"/>
    <property type="match status" value="1"/>
</dbReference>
<dbReference type="Gene3D" id="3.40.50.300">
    <property type="entry name" value="P-loop containing nucleotide triphosphate hydrolases"/>
    <property type="match status" value="1"/>
</dbReference>
<dbReference type="HAMAP" id="MF_00268">
    <property type="entry name" value="RecA"/>
    <property type="match status" value="1"/>
</dbReference>
<dbReference type="InterPro" id="IPR003593">
    <property type="entry name" value="AAA+_ATPase"/>
</dbReference>
<dbReference type="InterPro" id="IPR013765">
    <property type="entry name" value="DNA_recomb/repair_RecA"/>
</dbReference>
<dbReference type="InterPro" id="IPR020584">
    <property type="entry name" value="DNA_recomb/repair_RecA_CS"/>
</dbReference>
<dbReference type="InterPro" id="IPR027417">
    <property type="entry name" value="P-loop_NTPase"/>
</dbReference>
<dbReference type="InterPro" id="IPR049261">
    <property type="entry name" value="RecA-like_C"/>
</dbReference>
<dbReference type="InterPro" id="IPR049428">
    <property type="entry name" value="RecA-like_N"/>
</dbReference>
<dbReference type="InterPro" id="IPR020588">
    <property type="entry name" value="RecA_ATP-bd"/>
</dbReference>
<dbReference type="InterPro" id="IPR023400">
    <property type="entry name" value="RecA_C_sf"/>
</dbReference>
<dbReference type="InterPro" id="IPR020587">
    <property type="entry name" value="RecA_monomer-monomer_interface"/>
</dbReference>
<dbReference type="NCBIfam" id="TIGR02012">
    <property type="entry name" value="tigrfam_recA"/>
    <property type="match status" value="1"/>
</dbReference>
<dbReference type="PANTHER" id="PTHR45900:SF1">
    <property type="entry name" value="MITOCHONDRIAL DNA REPAIR PROTEIN RECA HOMOLOG-RELATED"/>
    <property type="match status" value="1"/>
</dbReference>
<dbReference type="PANTHER" id="PTHR45900">
    <property type="entry name" value="RECA"/>
    <property type="match status" value="1"/>
</dbReference>
<dbReference type="Pfam" id="PF00154">
    <property type="entry name" value="RecA"/>
    <property type="match status" value="1"/>
</dbReference>
<dbReference type="Pfam" id="PF21096">
    <property type="entry name" value="RecA_C"/>
    <property type="match status" value="1"/>
</dbReference>
<dbReference type="PRINTS" id="PR00142">
    <property type="entry name" value="RECA"/>
</dbReference>
<dbReference type="SMART" id="SM00382">
    <property type="entry name" value="AAA"/>
    <property type="match status" value="1"/>
</dbReference>
<dbReference type="SUPFAM" id="SSF52540">
    <property type="entry name" value="P-loop containing nucleoside triphosphate hydrolases"/>
    <property type="match status" value="1"/>
</dbReference>
<dbReference type="SUPFAM" id="SSF54752">
    <property type="entry name" value="RecA protein, C-terminal domain"/>
    <property type="match status" value="1"/>
</dbReference>
<dbReference type="PROSITE" id="PS00321">
    <property type="entry name" value="RECA_1"/>
    <property type="match status" value="1"/>
</dbReference>
<dbReference type="PROSITE" id="PS50162">
    <property type="entry name" value="RECA_2"/>
    <property type="match status" value="1"/>
</dbReference>
<dbReference type="PROSITE" id="PS50163">
    <property type="entry name" value="RECA_3"/>
    <property type="match status" value="1"/>
</dbReference>
<keyword id="KW-0067">ATP-binding</keyword>
<keyword id="KW-0963">Cytoplasm</keyword>
<keyword id="KW-0227">DNA damage</keyword>
<keyword id="KW-0233">DNA recombination</keyword>
<keyword id="KW-0234">DNA repair</keyword>
<keyword id="KW-0238">DNA-binding</keyword>
<keyword id="KW-0547">Nucleotide-binding</keyword>
<keyword id="KW-1185">Reference proteome</keyword>
<keyword id="KW-0742">SOS response</keyword>
<feature type="chain" id="PRO_0000122912" description="Protein RecA">
    <location>
        <begin position="1"/>
        <end position="354"/>
    </location>
</feature>
<feature type="binding site" evidence="1">
    <location>
        <begin position="78"/>
        <end position="85"/>
    </location>
    <ligand>
        <name>ATP</name>
        <dbReference type="ChEBI" id="CHEBI:30616"/>
    </ligand>
</feature>
<feature type="sequence conflict" description="In Ref. 1; AAD29645." evidence="2" ref="1">
    <original>M</original>
    <variation>D</variation>
    <location>
        <position position="1"/>
    </location>
</feature>
<feature type="sequence conflict" description="In Ref. 1; AAD29645." evidence="2" ref="1">
    <original>AP</original>
    <variation>LR</variation>
    <location>
        <begin position="264"/>
        <end position="265"/>
    </location>
</feature>
<accession>Q9X5D8</accession>
<accession>Q5NNC0</accession>
<evidence type="ECO:0000255" key="1">
    <source>
        <dbReference type="HAMAP-Rule" id="MF_00268"/>
    </source>
</evidence>
<evidence type="ECO:0000305" key="2"/>